<organism>
    <name type="scientific">Caldicellulosiruptor bescii (strain ATCC BAA-1888 / DSM 6725 / KCTC 15123 / Z-1320)</name>
    <name type="common">Anaerocellum thermophilum</name>
    <dbReference type="NCBI Taxonomy" id="521460"/>
    <lineage>
        <taxon>Bacteria</taxon>
        <taxon>Bacillati</taxon>
        <taxon>Bacillota</taxon>
        <taxon>Bacillota incertae sedis</taxon>
        <taxon>Caldicellulosiruptorales</taxon>
        <taxon>Caldicellulosiruptoraceae</taxon>
        <taxon>Caldicellulosiruptor</taxon>
    </lineage>
</organism>
<gene>
    <name evidence="1" type="primary">hisS</name>
    <name type="ordered locus">Athe_0592</name>
</gene>
<name>SYH_CALBD</name>
<evidence type="ECO:0000255" key="1">
    <source>
        <dbReference type="HAMAP-Rule" id="MF_00127"/>
    </source>
</evidence>
<feature type="chain" id="PRO_1000199109" description="Histidine--tRNA ligase">
    <location>
        <begin position="1"/>
        <end position="421"/>
    </location>
</feature>
<dbReference type="EC" id="6.1.1.21" evidence="1"/>
<dbReference type="EMBL" id="CP001393">
    <property type="protein sequence ID" value="ACM59718.1"/>
    <property type="molecule type" value="Genomic_DNA"/>
</dbReference>
<dbReference type="RefSeq" id="WP_015907171.1">
    <property type="nucleotide sequence ID" value="NC_012034.1"/>
</dbReference>
<dbReference type="SMR" id="B9MPF7"/>
<dbReference type="STRING" id="521460.Athe_0592"/>
<dbReference type="GeneID" id="31771947"/>
<dbReference type="KEGG" id="ate:Athe_0592"/>
<dbReference type="eggNOG" id="COG0124">
    <property type="taxonomic scope" value="Bacteria"/>
</dbReference>
<dbReference type="HOGENOM" id="CLU_025113_1_1_9"/>
<dbReference type="Proteomes" id="UP000007723">
    <property type="component" value="Chromosome"/>
</dbReference>
<dbReference type="GO" id="GO:0005737">
    <property type="term" value="C:cytoplasm"/>
    <property type="evidence" value="ECO:0007669"/>
    <property type="project" value="UniProtKB-SubCell"/>
</dbReference>
<dbReference type="GO" id="GO:0005524">
    <property type="term" value="F:ATP binding"/>
    <property type="evidence" value="ECO:0007669"/>
    <property type="project" value="UniProtKB-UniRule"/>
</dbReference>
<dbReference type="GO" id="GO:0140096">
    <property type="term" value="F:catalytic activity, acting on a protein"/>
    <property type="evidence" value="ECO:0007669"/>
    <property type="project" value="UniProtKB-ARBA"/>
</dbReference>
<dbReference type="GO" id="GO:0004821">
    <property type="term" value="F:histidine-tRNA ligase activity"/>
    <property type="evidence" value="ECO:0007669"/>
    <property type="project" value="UniProtKB-UniRule"/>
</dbReference>
<dbReference type="GO" id="GO:0016740">
    <property type="term" value="F:transferase activity"/>
    <property type="evidence" value="ECO:0007669"/>
    <property type="project" value="UniProtKB-ARBA"/>
</dbReference>
<dbReference type="GO" id="GO:0006427">
    <property type="term" value="P:histidyl-tRNA aminoacylation"/>
    <property type="evidence" value="ECO:0007669"/>
    <property type="project" value="UniProtKB-UniRule"/>
</dbReference>
<dbReference type="CDD" id="cd00773">
    <property type="entry name" value="HisRS-like_core"/>
    <property type="match status" value="1"/>
</dbReference>
<dbReference type="CDD" id="cd00859">
    <property type="entry name" value="HisRS_anticodon"/>
    <property type="match status" value="1"/>
</dbReference>
<dbReference type="Gene3D" id="3.40.50.800">
    <property type="entry name" value="Anticodon-binding domain"/>
    <property type="match status" value="1"/>
</dbReference>
<dbReference type="Gene3D" id="3.30.930.10">
    <property type="entry name" value="Bira Bifunctional Protein, Domain 2"/>
    <property type="match status" value="1"/>
</dbReference>
<dbReference type="HAMAP" id="MF_00127">
    <property type="entry name" value="His_tRNA_synth"/>
    <property type="match status" value="1"/>
</dbReference>
<dbReference type="InterPro" id="IPR006195">
    <property type="entry name" value="aa-tRNA-synth_II"/>
</dbReference>
<dbReference type="InterPro" id="IPR045864">
    <property type="entry name" value="aa-tRNA-synth_II/BPL/LPL"/>
</dbReference>
<dbReference type="InterPro" id="IPR004154">
    <property type="entry name" value="Anticodon-bd"/>
</dbReference>
<dbReference type="InterPro" id="IPR036621">
    <property type="entry name" value="Anticodon-bd_dom_sf"/>
</dbReference>
<dbReference type="InterPro" id="IPR015807">
    <property type="entry name" value="His-tRNA-ligase"/>
</dbReference>
<dbReference type="InterPro" id="IPR041715">
    <property type="entry name" value="HisRS-like_core"/>
</dbReference>
<dbReference type="InterPro" id="IPR004516">
    <property type="entry name" value="HisRS/HisZ"/>
</dbReference>
<dbReference type="InterPro" id="IPR033656">
    <property type="entry name" value="HisRS_anticodon"/>
</dbReference>
<dbReference type="NCBIfam" id="TIGR00442">
    <property type="entry name" value="hisS"/>
    <property type="match status" value="1"/>
</dbReference>
<dbReference type="PANTHER" id="PTHR43707:SF1">
    <property type="entry name" value="HISTIDINE--TRNA LIGASE, MITOCHONDRIAL-RELATED"/>
    <property type="match status" value="1"/>
</dbReference>
<dbReference type="PANTHER" id="PTHR43707">
    <property type="entry name" value="HISTIDYL-TRNA SYNTHETASE"/>
    <property type="match status" value="1"/>
</dbReference>
<dbReference type="Pfam" id="PF03129">
    <property type="entry name" value="HGTP_anticodon"/>
    <property type="match status" value="1"/>
</dbReference>
<dbReference type="Pfam" id="PF13393">
    <property type="entry name" value="tRNA-synt_His"/>
    <property type="match status" value="1"/>
</dbReference>
<dbReference type="PIRSF" id="PIRSF001549">
    <property type="entry name" value="His-tRNA_synth"/>
    <property type="match status" value="1"/>
</dbReference>
<dbReference type="SUPFAM" id="SSF52954">
    <property type="entry name" value="Class II aaRS ABD-related"/>
    <property type="match status" value="1"/>
</dbReference>
<dbReference type="SUPFAM" id="SSF55681">
    <property type="entry name" value="Class II aaRS and biotin synthetases"/>
    <property type="match status" value="1"/>
</dbReference>
<dbReference type="PROSITE" id="PS50862">
    <property type="entry name" value="AA_TRNA_LIGASE_II"/>
    <property type="match status" value="1"/>
</dbReference>
<protein>
    <recommendedName>
        <fullName evidence="1">Histidine--tRNA ligase</fullName>
        <ecNumber evidence="1">6.1.1.21</ecNumber>
    </recommendedName>
    <alternativeName>
        <fullName evidence="1">Histidyl-tRNA synthetase</fullName>
        <shortName evidence="1">HisRS</shortName>
    </alternativeName>
</protein>
<reference key="1">
    <citation type="submission" date="2009-01" db="EMBL/GenBank/DDBJ databases">
        <title>Complete sequence of chromosome of Caldicellulosiruptor becscii DSM 6725.</title>
        <authorList>
            <person name="Lucas S."/>
            <person name="Copeland A."/>
            <person name="Lapidus A."/>
            <person name="Glavina del Rio T."/>
            <person name="Tice H."/>
            <person name="Bruce D."/>
            <person name="Goodwin L."/>
            <person name="Pitluck S."/>
            <person name="Sims D."/>
            <person name="Meincke L."/>
            <person name="Brettin T."/>
            <person name="Detter J.C."/>
            <person name="Han C."/>
            <person name="Larimer F."/>
            <person name="Land M."/>
            <person name="Hauser L."/>
            <person name="Kyrpides N."/>
            <person name="Ovchinnikova G."/>
            <person name="Kataeva I."/>
            <person name="Adams M.W.W."/>
        </authorList>
    </citation>
    <scope>NUCLEOTIDE SEQUENCE [LARGE SCALE GENOMIC DNA]</scope>
    <source>
        <strain>ATCC BAA-1888 / DSM 6725 / KCTC 15123 / Z-1320</strain>
    </source>
</reference>
<keyword id="KW-0030">Aminoacyl-tRNA synthetase</keyword>
<keyword id="KW-0067">ATP-binding</keyword>
<keyword id="KW-0963">Cytoplasm</keyword>
<keyword id="KW-0436">Ligase</keyword>
<keyword id="KW-0547">Nucleotide-binding</keyword>
<keyword id="KW-0648">Protein biosynthesis</keyword>
<comment type="catalytic activity">
    <reaction evidence="1">
        <text>tRNA(His) + L-histidine + ATP = L-histidyl-tRNA(His) + AMP + diphosphate + H(+)</text>
        <dbReference type="Rhea" id="RHEA:17313"/>
        <dbReference type="Rhea" id="RHEA-COMP:9665"/>
        <dbReference type="Rhea" id="RHEA-COMP:9689"/>
        <dbReference type="ChEBI" id="CHEBI:15378"/>
        <dbReference type="ChEBI" id="CHEBI:30616"/>
        <dbReference type="ChEBI" id="CHEBI:33019"/>
        <dbReference type="ChEBI" id="CHEBI:57595"/>
        <dbReference type="ChEBI" id="CHEBI:78442"/>
        <dbReference type="ChEBI" id="CHEBI:78527"/>
        <dbReference type="ChEBI" id="CHEBI:456215"/>
        <dbReference type="EC" id="6.1.1.21"/>
    </reaction>
</comment>
<comment type="subunit">
    <text evidence="1">Homodimer.</text>
</comment>
<comment type="subcellular location">
    <subcellularLocation>
        <location evidence="1">Cytoplasm</location>
    </subcellularLocation>
</comment>
<comment type="similarity">
    <text evidence="1">Belongs to the class-II aminoacyl-tRNA synthetase family.</text>
</comment>
<proteinExistence type="inferred from homology"/>
<sequence>MKIQAPKGTKDVLPEESYMWQYVENKFREVCKLYGYQEVRFPTFEYTELFQRGVGDTTDIVQKEMYTFLDKGGRSITLRPEGTASTARLFIEHGFASRPMPQRFYYIISAFRYENTQGGRFREFHQFGIENFGSSSPVTDAEVISLAYNFFTSLGLDNITVNINSIGCPVCRKEYVKNLKEYFSANSQKLCHTCHQRLDKNPMRILDCKEEGCKLITKDAPKPIDYLCDDCKSHFESVKTYLDSAMVSYKVDPFIVRGLDYYTKTVFEIVATVSDKELAICGGGRYDNLIEQIGGPSIAGIGFAIGVERLLMLLEQNGLLPARSQVPRVFVATIGENGIKKAFEIARMLRFEGISTVVEEMGRSLKSQMKYADKIGCEFSIIIGDDEIEKGVCKVRNMKTSSEEIVEIENICEYLKEKLQK</sequence>
<accession>B9MPF7</accession>